<accession>A8MX34</accession>
<dbReference type="EMBL" id="AC006070">
    <property type="status" value="NOT_ANNOTATED_CDS"/>
    <property type="molecule type" value="Genomic_DNA"/>
</dbReference>
<dbReference type="EMBL" id="CH471152">
    <property type="protein sequence ID" value="EAW60724.1"/>
    <property type="molecule type" value="Genomic_DNA"/>
</dbReference>
<dbReference type="CCDS" id="CCDS62183.1"/>
<dbReference type="RefSeq" id="NP_001244238.1">
    <property type="nucleotide sequence ID" value="NM_001257309.1"/>
</dbReference>
<dbReference type="FunCoup" id="A8MX34">
    <property type="interactions" value="3"/>
</dbReference>
<dbReference type="STRING" id="9606.ENSP00000375148"/>
<dbReference type="BioMuta" id="KRTAP29-1"/>
<dbReference type="MassIVE" id="A8MX34"/>
<dbReference type="PaxDb" id="9606-ENSP00000375148"/>
<dbReference type="PeptideAtlas" id="A8MX34"/>
<dbReference type="DNASU" id="100533177"/>
<dbReference type="Ensembl" id="ENST00000391353.1">
    <property type="protein sequence ID" value="ENSP00000375148.1"/>
    <property type="gene ID" value="ENSG00000212658.1"/>
</dbReference>
<dbReference type="Ensembl" id="ENST00000574737.1">
    <property type="protein sequence ID" value="ENSP00000461202.1"/>
    <property type="gene ID" value="ENSG00000262542.1"/>
</dbReference>
<dbReference type="Ensembl" id="ENST00000576125.1">
    <property type="protein sequence ID" value="ENSP00000459109.1"/>
    <property type="gene ID" value="ENSG00000262218.1"/>
</dbReference>
<dbReference type="Ensembl" id="ENST00000709614.1">
    <property type="protein sequence ID" value="ENSP00000517799.1"/>
    <property type="gene ID" value="ENSG00000292050.1"/>
</dbReference>
<dbReference type="GeneID" id="100533177"/>
<dbReference type="KEGG" id="hsa:100533177"/>
<dbReference type="MANE-Select" id="ENST00000391353.1">
    <property type="protein sequence ID" value="ENSP00000375148.1"/>
    <property type="RefSeq nucleotide sequence ID" value="NM_001257309.1"/>
    <property type="RefSeq protein sequence ID" value="NP_001244238.1"/>
</dbReference>
<dbReference type="UCSC" id="uc031rai.1">
    <property type="organism name" value="human"/>
</dbReference>
<dbReference type="AGR" id="HGNC:34211"/>
<dbReference type="CTD" id="100533177"/>
<dbReference type="GeneCards" id="KRTAP29-1"/>
<dbReference type="HGNC" id="HGNC:34211">
    <property type="gene designation" value="KRTAP29-1"/>
</dbReference>
<dbReference type="HPA" id="ENSG00000212658">
    <property type="expression patterns" value="Tissue enriched (skin)"/>
</dbReference>
<dbReference type="neXtProt" id="NX_A8MX34"/>
<dbReference type="VEuPathDB" id="HostDB:ENSG00000212658"/>
<dbReference type="eggNOG" id="ENOG502RPU0">
    <property type="taxonomic scope" value="Eukaryota"/>
</dbReference>
<dbReference type="GeneTree" id="ENSGT00940000164459"/>
<dbReference type="HOGENOM" id="CLU_062832_0_0_1"/>
<dbReference type="InParanoid" id="A8MX34"/>
<dbReference type="OMA" id="GQPTCDG"/>
<dbReference type="OrthoDB" id="9446848at2759"/>
<dbReference type="PAN-GO" id="A8MX34">
    <property type="GO annotations" value="0 GO annotations based on evolutionary models"/>
</dbReference>
<dbReference type="PhylomeDB" id="A8MX34"/>
<dbReference type="PathwayCommons" id="A8MX34"/>
<dbReference type="Reactome" id="R-HSA-6805567">
    <property type="pathway name" value="Keratinization"/>
</dbReference>
<dbReference type="SignaLink" id="A8MX34"/>
<dbReference type="BioGRID-ORCS" id="100533177">
    <property type="hits" value="13 hits in 1085 CRISPR screens"/>
</dbReference>
<dbReference type="Pharos" id="A8MX34">
    <property type="development level" value="Tdark"/>
</dbReference>
<dbReference type="PRO" id="PR:A8MX34"/>
<dbReference type="Proteomes" id="UP000005640">
    <property type="component" value="Chromosome 17"/>
</dbReference>
<dbReference type="RNAct" id="A8MX34">
    <property type="molecule type" value="protein"/>
</dbReference>
<dbReference type="Bgee" id="ENSG00000212658">
    <property type="expression patterns" value="Expressed in primordial germ cell in gonad and 11 other cell types or tissues"/>
</dbReference>
<dbReference type="GO" id="GO:0005829">
    <property type="term" value="C:cytosol"/>
    <property type="evidence" value="ECO:0000304"/>
    <property type="project" value="Reactome"/>
</dbReference>
<dbReference type="GO" id="GO:0045095">
    <property type="term" value="C:keratin filament"/>
    <property type="evidence" value="ECO:0007669"/>
    <property type="project" value="InterPro"/>
</dbReference>
<dbReference type="GO" id="GO:0005198">
    <property type="term" value="F:structural molecule activity"/>
    <property type="evidence" value="ECO:0007669"/>
    <property type="project" value="InterPro"/>
</dbReference>
<dbReference type="InterPro" id="IPR002494">
    <property type="entry name" value="KAP"/>
</dbReference>
<dbReference type="InterPro" id="IPR007659">
    <property type="entry name" value="Keratin_matx"/>
</dbReference>
<dbReference type="PANTHER" id="PTHR23260">
    <property type="entry name" value="KERATIN ASSOCIATED PROTEIN 3-3-RELATED"/>
    <property type="match status" value="1"/>
</dbReference>
<dbReference type="PANTHER" id="PTHR23260:SF7">
    <property type="entry name" value="KERATIN-ASSOCIATED PROTEIN 26-1"/>
    <property type="match status" value="1"/>
</dbReference>
<dbReference type="Pfam" id="PF13885">
    <property type="entry name" value="Keratin_B2_2"/>
    <property type="match status" value="3"/>
</dbReference>
<name>KR291_HUMAN</name>
<comment type="similarity">
    <text evidence="1">Belongs to the KRTAP type 10 family.</text>
</comment>
<gene>
    <name type="primary">KRTAP29-1</name>
    <name type="synonym">KAP29.2</name>
</gene>
<evidence type="ECO:0000305" key="1"/>
<proteinExistence type="evidence at protein level"/>
<organism>
    <name type="scientific">Homo sapiens</name>
    <name type="common">Human</name>
    <dbReference type="NCBI Taxonomy" id="9606"/>
    <lineage>
        <taxon>Eukaryota</taxon>
        <taxon>Metazoa</taxon>
        <taxon>Chordata</taxon>
        <taxon>Craniata</taxon>
        <taxon>Vertebrata</taxon>
        <taxon>Euteleostomi</taxon>
        <taxon>Mammalia</taxon>
        <taxon>Eutheria</taxon>
        <taxon>Euarchontoglires</taxon>
        <taxon>Primates</taxon>
        <taxon>Haplorrhini</taxon>
        <taxon>Catarrhini</taxon>
        <taxon>Hominidae</taxon>
        <taxon>Homo</taxon>
    </lineage>
</organism>
<sequence length="341" mass="35211">MADGCCPGNTTAIPAVPTITTYPVKGGFRHALCLPSSCHSRMWQLVTCQESCQPSIGAPSGCDPASCQPTRLPATSCVGFVCQPMCSHAACYQSGTGQSPCLVSSCQPSCSESTCCQEKCCDASPCQQSSCQESVCMSGSCQAACGQSVCCDAGSCQPSCSEVTSCPETSCLPTICTASPCQPTWCQGSSCQPVSGEGQPCKSTYYQPICYIFKPCQSALYMPVPCQPSTCVFSSCNTTCCVPSHCQPPHCQLVPSTCFIYQPVANCQAPCSTKNCCKPASCDTVISGQPTCDGPPSYNQSGCKSACCVTGLGTSPSSGSNCLPTSCQPSCESSFCKATLC</sequence>
<reference key="1">
    <citation type="journal article" date="2006" name="Nature">
        <title>DNA sequence of human chromosome 17 and analysis of rearrangement in the human lineage.</title>
        <authorList>
            <person name="Zody M.C."/>
            <person name="Garber M."/>
            <person name="Adams D.J."/>
            <person name="Sharpe T."/>
            <person name="Harrow J."/>
            <person name="Lupski J.R."/>
            <person name="Nicholson C."/>
            <person name="Searle S.M."/>
            <person name="Wilming L."/>
            <person name="Young S.K."/>
            <person name="Abouelleil A."/>
            <person name="Allen N.R."/>
            <person name="Bi W."/>
            <person name="Bloom T."/>
            <person name="Borowsky M.L."/>
            <person name="Bugalter B.E."/>
            <person name="Butler J."/>
            <person name="Chang J.L."/>
            <person name="Chen C.-K."/>
            <person name="Cook A."/>
            <person name="Corum B."/>
            <person name="Cuomo C.A."/>
            <person name="de Jong P.J."/>
            <person name="DeCaprio D."/>
            <person name="Dewar K."/>
            <person name="FitzGerald M."/>
            <person name="Gilbert J."/>
            <person name="Gibson R."/>
            <person name="Gnerre S."/>
            <person name="Goldstein S."/>
            <person name="Grafham D.V."/>
            <person name="Grocock R."/>
            <person name="Hafez N."/>
            <person name="Hagopian D.S."/>
            <person name="Hart E."/>
            <person name="Norman C.H."/>
            <person name="Humphray S."/>
            <person name="Jaffe D.B."/>
            <person name="Jones M."/>
            <person name="Kamal M."/>
            <person name="Khodiyar V.K."/>
            <person name="LaButti K."/>
            <person name="Laird G."/>
            <person name="Lehoczky J."/>
            <person name="Liu X."/>
            <person name="Lokyitsang T."/>
            <person name="Loveland J."/>
            <person name="Lui A."/>
            <person name="Macdonald P."/>
            <person name="Major J.E."/>
            <person name="Matthews L."/>
            <person name="Mauceli E."/>
            <person name="McCarroll S.A."/>
            <person name="Mihalev A.H."/>
            <person name="Mudge J."/>
            <person name="Nguyen C."/>
            <person name="Nicol R."/>
            <person name="O'Leary S.B."/>
            <person name="Osoegawa K."/>
            <person name="Schwartz D.C."/>
            <person name="Shaw-Smith C."/>
            <person name="Stankiewicz P."/>
            <person name="Steward C."/>
            <person name="Swarbreck D."/>
            <person name="Venkataraman V."/>
            <person name="Whittaker C.A."/>
            <person name="Yang X."/>
            <person name="Zimmer A.R."/>
            <person name="Bradley A."/>
            <person name="Hubbard T."/>
            <person name="Birren B.W."/>
            <person name="Rogers J."/>
            <person name="Lander E.S."/>
            <person name="Nusbaum C."/>
        </authorList>
    </citation>
    <scope>NUCLEOTIDE SEQUENCE [LARGE SCALE GENOMIC DNA]</scope>
</reference>
<reference key="2">
    <citation type="submission" date="2005-07" db="EMBL/GenBank/DDBJ databases">
        <authorList>
            <person name="Mural R.J."/>
            <person name="Istrail S."/>
            <person name="Sutton G.G."/>
            <person name="Florea L."/>
            <person name="Halpern A.L."/>
            <person name="Mobarry C.M."/>
            <person name="Lippert R."/>
            <person name="Walenz B."/>
            <person name="Shatkay H."/>
            <person name="Dew I."/>
            <person name="Miller J.R."/>
            <person name="Flanigan M.J."/>
            <person name="Edwards N.J."/>
            <person name="Bolanos R."/>
            <person name="Fasulo D."/>
            <person name="Halldorsson B.V."/>
            <person name="Hannenhalli S."/>
            <person name="Turner R."/>
            <person name="Yooseph S."/>
            <person name="Lu F."/>
            <person name="Nusskern D.R."/>
            <person name="Shue B.C."/>
            <person name="Zheng X.H."/>
            <person name="Zhong F."/>
            <person name="Delcher A.L."/>
            <person name="Huson D.H."/>
            <person name="Kravitz S.A."/>
            <person name="Mouchard L."/>
            <person name="Reinert K."/>
            <person name="Remington K.A."/>
            <person name="Clark A.G."/>
            <person name="Waterman M.S."/>
            <person name="Eichler E.E."/>
            <person name="Adams M.D."/>
            <person name="Hunkapiller M.W."/>
            <person name="Myers E.W."/>
            <person name="Venter J.C."/>
        </authorList>
    </citation>
    <scope>NUCLEOTIDE SEQUENCE [LARGE SCALE GENOMIC DNA]</scope>
</reference>
<protein>
    <recommendedName>
        <fullName>Keratin-associated protein 29-1</fullName>
    </recommendedName>
    <alternativeName>
        <fullName>Keratin-associated protein 29.2</fullName>
    </alternativeName>
</protein>
<feature type="chain" id="PRO_0000348961" description="Keratin-associated protein 29-1">
    <location>
        <begin position="1"/>
        <end position="341"/>
    </location>
</feature>
<feature type="repeat" description="1">
    <location>
        <begin position="5"/>
        <end position="9"/>
    </location>
</feature>
<feature type="repeat" description="2">
    <location>
        <begin position="115"/>
        <end position="119"/>
    </location>
</feature>
<feature type="repeat" description="3">
    <location>
        <begin position="120"/>
        <end position="124"/>
    </location>
</feature>
<feature type="repeat" description="4">
    <location>
        <begin position="150"/>
        <end position="154"/>
    </location>
</feature>
<feature type="repeat" description="5">
    <location>
        <begin position="240"/>
        <end position="244"/>
    </location>
</feature>
<feature type="repeat" description="6">
    <location>
        <begin position="276"/>
        <end position="280"/>
    </location>
</feature>
<feature type="repeat" description="7">
    <location>
        <begin position="307"/>
        <end position="311"/>
    </location>
</feature>
<feature type="region of interest" description="7 X 5 AA repeats of C-C-X(3)">
    <location>
        <begin position="5"/>
        <end position="311"/>
    </location>
</feature>
<keyword id="KW-0416">Keratin</keyword>
<keyword id="KW-1267">Proteomics identification</keyword>
<keyword id="KW-1185">Reference proteome</keyword>
<keyword id="KW-0677">Repeat</keyword>